<name>NDK_CUPMC</name>
<dbReference type="EC" id="2.7.4.6" evidence="1"/>
<dbReference type="EMBL" id="CP000352">
    <property type="protein sequence ID" value="ABF08989.1"/>
    <property type="molecule type" value="Genomic_DNA"/>
</dbReference>
<dbReference type="RefSeq" id="WP_011516823.1">
    <property type="nucleotide sequence ID" value="NC_007973.1"/>
</dbReference>
<dbReference type="SMR" id="Q1LLI7"/>
<dbReference type="STRING" id="266264.Rmet_2110"/>
<dbReference type="KEGG" id="rme:Rmet_2110"/>
<dbReference type="eggNOG" id="COG0105">
    <property type="taxonomic scope" value="Bacteria"/>
</dbReference>
<dbReference type="HOGENOM" id="CLU_060216_8_1_4"/>
<dbReference type="Proteomes" id="UP000002429">
    <property type="component" value="Chromosome"/>
</dbReference>
<dbReference type="GO" id="GO:0005737">
    <property type="term" value="C:cytoplasm"/>
    <property type="evidence" value="ECO:0007669"/>
    <property type="project" value="UniProtKB-SubCell"/>
</dbReference>
<dbReference type="GO" id="GO:0005524">
    <property type="term" value="F:ATP binding"/>
    <property type="evidence" value="ECO:0007669"/>
    <property type="project" value="UniProtKB-UniRule"/>
</dbReference>
<dbReference type="GO" id="GO:0046872">
    <property type="term" value="F:metal ion binding"/>
    <property type="evidence" value="ECO:0007669"/>
    <property type="project" value="UniProtKB-KW"/>
</dbReference>
<dbReference type="GO" id="GO:0004550">
    <property type="term" value="F:nucleoside diphosphate kinase activity"/>
    <property type="evidence" value="ECO:0007669"/>
    <property type="project" value="UniProtKB-UniRule"/>
</dbReference>
<dbReference type="GO" id="GO:0006241">
    <property type="term" value="P:CTP biosynthetic process"/>
    <property type="evidence" value="ECO:0007669"/>
    <property type="project" value="UniProtKB-UniRule"/>
</dbReference>
<dbReference type="GO" id="GO:0006183">
    <property type="term" value="P:GTP biosynthetic process"/>
    <property type="evidence" value="ECO:0007669"/>
    <property type="project" value="UniProtKB-UniRule"/>
</dbReference>
<dbReference type="GO" id="GO:0006228">
    <property type="term" value="P:UTP biosynthetic process"/>
    <property type="evidence" value="ECO:0007669"/>
    <property type="project" value="UniProtKB-UniRule"/>
</dbReference>
<dbReference type="CDD" id="cd04413">
    <property type="entry name" value="NDPk_I"/>
    <property type="match status" value="1"/>
</dbReference>
<dbReference type="FunFam" id="3.30.70.141:FF:000001">
    <property type="entry name" value="Nucleoside diphosphate kinase"/>
    <property type="match status" value="1"/>
</dbReference>
<dbReference type="Gene3D" id="3.30.70.141">
    <property type="entry name" value="Nucleoside diphosphate kinase-like domain"/>
    <property type="match status" value="1"/>
</dbReference>
<dbReference type="HAMAP" id="MF_00451">
    <property type="entry name" value="NDP_kinase"/>
    <property type="match status" value="1"/>
</dbReference>
<dbReference type="InterPro" id="IPR034907">
    <property type="entry name" value="NDK-like_dom"/>
</dbReference>
<dbReference type="InterPro" id="IPR036850">
    <property type="entry name" value="NDK-like_dom_sf"/>
</dbReference>
<dbReference type="InterPro" id="IPR001564">
    <property type="entry name" value="Nucleoside_diP_kinase"/>
</dbReference>
<dbReference type="InterPro" id="IPR023005">
    <property type="entry name" value="Nucleoside_diP_kinase_AS"/>
</dbReference>
<dbReference type="NCBIfam" id="NF001908">
    <property type="entry name" value="PRK00668.1"/>
    <property type="match status" value="1"/>
</dbReference>
<dbReference type="PANTHER" id="PTHR46161">
    <property type="entry name" value="NUCLEOSIDE DIPHOSPHATE KINASE"/>
    <property type="match status" value="1"/>
</dbReference>
<dbReference type="PANTHER" id="PTHR46161:SF3">
    <property type="entry name" value="NUCLEOSIDE DIPHOSPHATE KINASE DDB_G0292928-RELATED"/>
    <property type="match status" value="1"/>
</dbReference>
<dbReference type="Pfam" id="PF00334">
    <property type="entry name" value="NDK"/>
    <property type="match status" value="1"/>
</dbReference>
<dbReference type="PRINTS" id="PR01243">
    <property type="entry name" value="NUCDPKINASE"/>
</dbReference>
<dbReference type="SMART" id="SM00562">
    <property type="entry name" value="NDK"/>
    <property type="match status" value="1"/>
</dbReference>
<dbReference type="SUPFAM" id="SSF54919">
    <property type="entry name" value="Nucleoside diphosphate kinase, NDK"/>
    <property type="match status" value="1"/>
</dbReference>
<dbReference type="PROSITE" id="PS00469">
    <property type="entry name" value="NDPK"/>
    <property type="match status" value="1"/>
</dbReference>
<dbReference type="PROSITE" id="PS51374">
    <property type="entry name" value="NDPK_LIKE"/>
    <property type="match status" value="1"/>
</dbReference>
<feature type="chain" id="PRO_0000267794" description="Nucleoside diphosphate kinase">
    <location>
        <begin position="1"/>
        <end position="141"/>
    </location>
</feature>
<feature type="active site" description="Pros-phosphohistidine intermediate" evidence="1">
    <location>
        <position position="117"/>
    </location>
</feature>
<feature type="binding site" evidence="1">
    <location>
        <position position="11"/>
    </location>
    <ligand>
        <name>ATP</name>
        <dbReference type="ChEBI" id="CHEBI:30616"/>
    </ligand>
</feature>
<feature type="binding site" evidence="1">
    <location>
        <position position="59"/>
    </location>
    <ligand>
        <name>ATP</name>
        <dbReference type="ChEBI" id="CHEBI:30616"/>
    </ligand>
</feature>
<feature type="binding site" evidence="1">
    <location>
        <position position="87"/>
    </location>
    <ligand>
        <name>ATP</name>
        <dbReference type="ChEBI" id="CHEBI:30616"/>
    </ligand>
</feature>
<feature type="binding site" evidence="1">
    <location>
        <position position="93"/>
    </location>
    <ligand>
        <name>ATP</name>
        <dbReference type="ChEBI" id="CHEBI:30616"/>
    </ligand>
</feature>
<feature type="binding site" evidence="1">
    <location>
        <position position="104"/>
    </location>
    <ligand>
        <name>ATP</name>
        <dbReference type="ChEBI" id="CHEBI:30616"/>
    </ligand>
</feature>
<feature type="binding site" evidence="1">
    <location>
        <position position="114"/>
    </location>
    <ligand>
        <name>ATP</name>
        <dbReference type="ChEBI" id="CHEBI:30616"/>
    </ligand>
</feature>
<protein>
    <recommendedName>
        <fullName evidence="1">Nucleoside diphosphate kinase</fullName>
        <shortName evidence="1">NDK</shortName>
        <shortName evidence="1">NDP kinase</shortName>
        <ecNumber evidence="1">2.7.4.6</ecNumber>
    </recommendedName>
    <alternativeName>
        <fullName evidence="1">Nucleoside-2-P kinase</fullName>
    </alternativeName>
</protein>
<accession>Q1LLI7</accession>
<evidence type="ECO:0000255" key="1">
    <source>
        <dbReference type="HAMAP-Rule" id="MF_00451"/>
    </source>
</evidence>
<organism>
    <name type="scientific">Cupriavidus metallidurans (strain ATCC 43123 / DSM 2839 / NBRC 102507 / CH34)</name>
    <name type="common">Ralstonia metallidurans</name>
    <dbReference type="NCBI Taxonomy" id="266264"/>
    <lineage>
        <taxon>Bacteria</taxon>
        <taxon>Pseudomonadati</taxon>
        <taxon>Pseudomonadota</taxon>
        <taxon>Betaproteobacteria</taxon>
        <taxon>Burkholderiales</taxon>
        <taxon>Burkholderiaceae</taxon>
        <taxon>Cupriavidus</taxon>
    </lineage>
</organism>
<reference key="1">
    <citation type="journal article" date="2010" name="PLoS ONE">
        <title>The complete genome sequence of Cupriavidus metallidurans strain CH34, a master survivalist in harsh and anthropogenic environments.</title>
        <authorList>
            <person name="Janssen P.J."/>
            <person name="Van Houdt R."/>
            <person name="Moors H."/>
            <person name="Monsieurs P."/>
            <person name="Morin N."/>
            <person name="Michaux A."/>
            <person name="Benotmane M.A."/>
            <person name="Leys N."/>
            <person name="Vallaeys T."/>
            <person name="Lapidus A."/>
            <person name="Monchy S."/>
            <person name="Medigue C."/>
            <person name="Taghavi S."/>
            <person name="McCorkle S."/>
            <person name="Dunn J."/>
            <person name="van der Lelie D."/>
            <person name="Mergeay M."/>
        </authorList>
    </citation>
    <scope>NUCLEOTIDE SEQUENCE [LARGE SCALE GENOMIC DNA]</scope>
    <source>
        <strain>ATCC 43123 / DSM 2839 / NBRC 102507 / CH34</strain>
    </source>
</reference>
<proteinExistence type="inferred from homology"/>
<keyword id="KW-0067">ATP-binding</keyword>
<keyword id="KW-0963">Cytoplasm</keyword>
<keyword id="KW-0418">Kinase</keyword>
<keyword id="KW-0460">Magnesium</keyword>
<keyword id="KW-0479">Metal-binding</keyword>
<keyword id="KW-0546">Nucleotide metabolism</keyword>
<keyword id="KW-0547">Nucleotide-binding</keyword>
<keyword id="KW-0597">Phosphoprotein</keyword>
<keyword id="KW-1185">Reference proteome</keyword>
<keyword id="KW-0808">Transferase</keyword>
<sequence length="141" mass="15247">MAIERTLSIIKPDAVAKNVIGQIYARFEAAGLKVVAAKMVHLSRGEAEQFYAVHKARPFFKDLVDFMVSGPVMIQALEGESAIAKNRDLMGATDPKKAEKGTIRADFADSIDANAVHGSDAPETAAVEVAFFFPGMNVYSR</sequence>
<comment type="function">
    <text evidence="1">Major role in the synthesis of nucleoside triphosphates other than ATP. The ATP gamma phosphate is transferred to the NDP beta phosphate via a ping-pong mechanism, using a phosphorylated active-site intermediate.</text>
</comment>
<comment type="catalytic activity">
    <reaction evidence="1">
        <text>a 2'-deoxyribonucleoside 5'-diphosphate + ATP = a 2'-deoxyribonucleoside 5'-triphosphate + ADP</text>
        <dbReference type="Rhea" id="RHEA:44640"/>
        <dbReference type="ChEBI" id="CHEBI:30616"/>
        <dbReference type="ChEBI" id="CHEBI:61560"/>
        <dbReference type="ChEBI" id="CHEBI:73316"/>
        <dbReference type="ChEBI" id="CHEBI:456216"/>
        <dbReference type="EC" id="2.7.4.6"/>
    </reaction>
</comment>
<comment type="catalytic activity">
    <reaction evidence="1">
        <text>a ribonucleoside 5'-diphosphate + ATP = a ribonucleoside 5'-triphosphate + ADP</text>
        <dbReference type="Rhea" id="RHEA:18113"/>
        <dbReference type="ChEBI" id="CHEBI:30616"/>
        <dbReference type="ChEBI" id="CHEBI:57930"/>
        <dbReference type="ChEBI" id="CHEBI:61557"/>
        <dbReference type="ChEBI" id="CHEBI:456216"/>
        <dbReference type="EC" id="2.7.4.6"/>
    </reaction>
</comment>
<comment type="cofactor">
    <cofactor evidence="1">
        <name>Mg(2+)</name>
        <dbReference type="ChEBI" id="CHEBI:18420"/>
    </cofactor>
</comment>
<comment type="subunit">
    <text evidence="1">Homotetramer.</text>
</comment>
<comment type="subcellular location">
    <subcellularLocation>
        <location evidence="1">Cytoplasm</location>
    </subcellularLocation>
</comment>
<comment type="similarity">
    <text evidence="1">Belongs to the NDK family.</text>
</comment>
<gene>
    <name evidence="1" type="primary">ndk</name>
    <name type="ordered locus">Rmet_2110</name>
</gene>